<proteinExistence type="evidence at protein level"/>
<reference key="1">
    <citation type="journal article" date="1994" name="Gene">
        <title>The biphenyl/polychlorinated biphenyl-degradation locus (bph) of Pseudomonas sp. LB400 encodes four additional metabolic enzymes.</title>
        <authorList>
            <person name="Hofer B."/>
            <person name="Backhaus S."/>
            <person name="Timmis K.N."/>
        </authorList>
    </citation>
    <scope>NUCLEOTIDE SEQUENCE [GENOMIC DNA]</scope>
    <source>
        <strain>LB400</strain>
    </source>
</reference>
<reference key="2">
    <citation type="journal article" date="2006" name="Proc. Natl. Acad. Sci. U.S.A.">
        <title>Burkholderia xenovorans LB400 harbors a multi-replicon, 9.73-Mbp genome shaped for versatility.</title>
        <authorList>
            <person name="Chain P.S.G."/>
            <person name="Denef V.J."/>
            <person name="Konstantinidis K.T."/>
            <person name="Vergez L.M."/>
            <person name="Agullo L."/>
            <person name="Reyes V.L."/>
            <person name="Hauser L."/>
            <person name="Cordova M."/>
            <person name="Gomez L."/>
            <person name="Gonzalez M."/>
            <person name="Land M."/>
            <person name="Lao V."/>
            <person name="Larimer F."/>
            <person name="LiPuma J.J."/>
            <person name="Mahenthiralingam E."/>
            <person name="Malfatti S.A."/>
            <person name="Marx C.J."/>
            <person name="Parnell J.J."/>
            <person name="Ramette A."/>
            <person name="Richardson P."/>
            <person name="Seeger M."/>
            <person name="Smith D."/>
            <person name="Spilker T."/>
            <person name="Sul W.J."/>
            <person name="Tsoi T.V."/>
            <person name="Ulrich L.E."/>
            <person name="Zhulin I.B."/>
            <person name="Tiedje J.M."/>
        </authorList>
    </citation>
    <scope>NUCLEOTIDE SEQUENCE [LARGE SCALE GENOMIC DNA]</scope>
    <source>
        <strain>LB400</strain>
    </source>
</reference>
<reference key="3">
    <citation type="journal article" date="2009" name="Biochemistry">
        <title>Characterization of an aldolase-dehydrogenase complex that exhibits substrate channeling in the polychlorinated biphenyls degradation pathway.</title>
        <authorList>
            <person name="Baker P."/>
            <person name="Pan D."/>
            <person name="Carere J."/>
            <person name="Rossi A."/>
            <person name="Wang W."/>
            <person name="Seah S.Y.K."/>
        </authorList>
    </citation>
    <scope>FUNCTION</scope>
    <scope>CATALYTIC ACTIVITY</scope>
    <scope>COFACTOR</scope>
    <scope>SUBSTRATE SPECIFICITY</scope>
    <scope>BIOPHYSICOCHEMICAL PROPERTIES</scope>
    <scope>SUBUNIT</scope>
    <scope>COMPLEX WITH BPHJ</scope>
    <source>
        <strain>LB400</strain>
    </source>
</reference>
<reference key="4">
    <citation type="journal article" date="2010" name="Biochemistry">
        <title>Comparison of two metal-dependent pyruvate aldolases related by convergent evolution: substrate specificity, kinetic mechanism, and substrate channeling.</title>
        <authorList>
            <person name="Wang W."/>
            <person name="Baker P."/>
            <person name="Seah S.Y."/>
        </authorList>
    </citation>
    <scope>FUNCTION</scope>
    <scope>SUBSTRATE SPECIFICITY</scope>
    <scope>STEREOSPECIFICITY</scope>
    <scope>KINETIC PARAMETERS</scope>
    <scope>KINETIC MECHANISM</scope>
    <source>
        <strain>LB400</strain>
    </source>
</reference>
<reference key="5">
    <citation type="journal article" date="2011" name="Biochemistry">
        <title>Probing the molecular basis of substrate specificity, stereospecificity, and catalysis in the class II pyruvate aldolase, BphI.</title>
        <authorList>
            <person name="Baker P."/>
            <person name="Carere J."/>
            <person name="Seah S.Y."/>
        </authorList>
    </citation>
    <scope>KINETIC PARAMETERS</scope>
    <scope>MUTAGENESIS OF ARG-16; HIS-20; LEU-87; LEU-89 AND TYR-290</scope>
    <scope>ACTIVE SITES</scope>
    <scope>CATALYTIC MECHANISM</scope>
    <source>
        <strain>LB400</strain>
    </source>
</reference>
<reference key="6">
    <citation type="journal article" date="2011" name="Biochemistry">
        <title>Investigating the molecular determinants for substrate channeling in BphI-BphJ, an aldolase-dehydrogenase complex from the polychlorinated biphenyls degradation pathway.</title>
        <authorList>
            <person name="Carere J."/>
            <person name="Baker P."/>
            <person name="Seah S.Y."/>
        </authorList>
    </citation>
    <scope>MUTAGENESIS OF HIS-20; LEU-89; TYR-290; GLY-322 AND GLY-323</scope>
    <scope>ALDEHYDE CHANNELING MECHANISM</scope>
    <source>
        <strain>LB400</strain>
    </source>
</reference>
<reference key="7">
    <citation type="journal article" date="2012" name="J. Am. Chem. Soc.">
        <title>Rational design of stereoselectivity in the class II pyruvate aldolase BphI.</title>
        <authorList>
            <person name="Baker P."/>
            <person name="Seah S.Y."/>
        </authorList>
    </citation>
    <scope>MUTAGENESIS OF LEU-87 AND TYR-290</scope>
    <source>
        <strain>LB400</strain>
    </source>
</reference>
<comment type="function">
    <text evidence="2 3">Catalyzes the retro-aldol cleavage of both 4-hydroxy-2-oxopentanoate (HOPA) and 4-hydroxy-2-oxohexanoate (HOHA) to pyruvate and acetaldehyde or propanaldehyde, respectively. The aldehydes produced by this reaction are directly channeled from BphI to the dehydrogenase BphJ, ensuring that these toxic aldehydes are sequestered from cellular components. Is involved in the meta-cleavage pathway for the degradation of polychlorinated biphenyls (PCBs). Appears to be stereospecific since it can cleave (4S)-4-hydroxy-2-oxopentanoate but not the (4R) isomer. Also exhibits a secondary oxaloacetate decarboxylase activity. Finally, is also able to catalyze the reverse reaction, albeit much less efficiently, i.e. the condensation of aldehyde acceptors of two to three carbons in length with pyruvate. This aldol addition reaction is stereospecific; the condensation of acetaldehyde and pyruvate with BphI produces only the (4S)-4-hydroxy-2-oxopentanoate isomer. Aldehyde channeling in the BphI-BphJ complex can occur in reverse, from the dehydrogenase to the aldolase active sites, and the BphJ reductive deacylation reaction increases 4-fold when BphI is catalyzing the aldol addition reaction. Therefore, the BphI-BphJ enzyme complex exhibits unique bidirectionality in substrate channeling and allosteric activation.</text>
</comment>
<comment type="catalytic activity">
    <reaction evidence="1 2">
        <text>(S)-4-hydroxy-2-oxopentanoate = acetaldehyde + pyruvate</text>
        <dbReference type="Rhea" id="RHEA:22624"/>
        <dbReference type="ChEBI" id="CHEBI:15343"/>
        <dbReference type="ChEBI" id="CHEBI:15361"/>
        <dbReference type="ChEBI" id="CHEBI:73143"/>
        <dbReference type="EC" id="4.1.3.39"/>
    </reaction>
</comment>
<comment type="catalytic activity">
    <reaction evidence="2">
        <text>(S)-4-hydroxy-2-oxohexanoate = propanal + pyruvate</text>
        <dbReference type="Rhea" id="RHEA:36003"/>
        <dbReference type="ChEBI" id="CHEBI:15361"/>
        <dbReference type="ChEBI" id="CHEBI:17153"/>
        <dbReference type="ChEBI" id="CHEBI:73142"/>
        <dbReference type="EC" id="4.1.3.43"/>
    </reaction>
</comment>
<comment type="cofactor">
    <cofactor evidence="2">
        <name>Mn(2+)</name>
        <dbReference type="ChEBI" id="CHEBI:29035"/>
    </cofactor>
    <cofactor evidence="2">
        <name>Cd(2+)</name>
        <dbReference type="ChEBI" id="CHEBI:48775"/>
    </cofactor>
    <cofactor evidence="2">
        <name>Co(2+)</name>
        <dbReference type="ChEBI" id="CHEBI:48828"/>
    </cofactor>
    <text evidence="2">Divalent metal cation. Has the highest activity with Mn(2+) as cofactor. Can also use Cd(2+) at low concentrations (0.01-0.1 mM) or Co(2+), although with less efficiency. Mg(2+) and Ni(2+) are very poor metal cofactors.</text>
</comment>
<comment type="activity regulation">
    <text>Competitively inhibited by oxalate. Also inhibited by high concentrations of Cd(2+) (1 mM) in vitro. Appears to be allosterically activated by aldehyde turnover occurring in BphJ, partly via NADH.</text>
</comment>
<comment type="biophysicochemical properties">
    <kinetics>
        <KM evidence="2 3 4">89 uM for (4S)-4-hydroxy-2-oxopentanoate (in the presence of NADH at pH 8 and 25 degrees Celsius)</KM>
        <KM evidence="2 3 4">0.22 mM for racemic 4-hydroxy-2-oxopentanoate (in the presence of NADH at pH 8 and 25 degrees Celsius)</KM>
        <KM evidence="2 3 4">1.12 mM for racemic 4-hydroxy-2-oxopentanoate (in the absence of NADH at pH 8 and 25 degrees Celsius)</KM>
        <KM evidence="2 3 4">0.18 mM for racemic 4-hydroxy-2-oxohexanoate (in the presence of NADH at pH 8 and 25 degrees Celsius)</KM>
        <KM evidence="2 3 4">0.35 mM for racemic 4-hydroxy-2-oxoheptanoate (in the presence of NADH at pH 8 and 25 degrees Celsius)</KM>
        <KM evidence="2 3 4">64.28 mM for acetaldehyde (in the absence of NADH at pH 8 and 25 degrees Celsius)</KM>
        <KM evidence="2 3 4">135.9 mM for propanaldehyde (in the absence of NADH at pH 8 and 25 degrees Celsius)</KM>
        <KM evidence="2 3 4">13 mM for pyruvate (at pH 8 and 25 degrees Celsius)</KM>
        <text>The catalytic efficiency is similar when using 4-hydroxy-2-oxopentanoate or 4-hydroxy-2-oxohexanoate as substrate, but is 10-fold lower with 4-hydroxy-2-oxoheptanoate. It is also 25-fold higher when NADH is present than the value obtained without nucleotides. Moreover, the catalytic efficiency is similar when using acetaldehyde or propanaldehyde as substrate in the aldol addition reaction.</text>
    </kinetics>
    <phDependence>
        <text evidence="2">Activity increases from pH 6.5 to 9.</text>
    </phDependence>
</comment>
<comment type="pathway">
    <text>Xenobiotic degradation; polychlorinated biphenyl degradation.</text>
</comment>
<comment type="subunit">
    <text evidence="2">Heterotetramer composed of two BphI (aldolase) and two BphJ (dehydrogenase).</text>
</comment>
<comment type="miscellaneous">
    <text>The aldol addition reaction proceeds via a compulsory order mechanism, with pyruvate binding first.</text>
</comment>
<comment type="similarity">
    <text evidence="1 7">Belongs to the 4-hydroxy-2-oxovalerate aldolase family.</text>
</comment>
<organism>
    <name type="scientific">Paraburkholderia xenovorans (strain LB400)</name>
    <dbReference type="NCBI Taxonomy" id="266265"/>
    <lineage>
        <taxon>Bacteria</taxon>
        <taxon>Pseudomonadati</taxon>
        <taxon>Pseudomonadota</taxon>
        <taxon>Betaproteobacteria</taxon>
        <taxon>Burkholderiales</taxon>
        <taxon>Burkholderiaceae</taxon>
        <taxon>Paraburkholderia</taxon>
    </lineage>
</organism>
<gene>
    <name type="primary">bphI</name>
    <name type="ordered locus">Bxeno_C1121</name>
    <name type="ORF">Bxe_C1187</name>
</gene>
<keyword id="KW-0021">Allosteric enzyme</keyword>
<keyword id="KW-0058">Aromatic hydrocarbons catabolism</keyword>
<keyword id="KW-0104">Cadmium</keyword>
<keyword id="KW-0170">Cobalt</keyword>
<keyword id="KW-0456">Lyase</keyword>
<keyword id="KW-0464">Manganese</keyword>
<keyword id="KW-0479">Metal-binding</keyword>
<keyword id="KW-1185">Reference proteome</keyword>
<protein>
    <recommendedName>
        <fullName evidence="1">4-hydroxy-2-oxovalerate aldolase 4</fullName>
        <shortName evidence="1">HOA 4</shortName>
        <ecNumber evidence="1 2">4.1.3.39</ecNumber>
    </recommendedName>
    <alternativeName>
        <fullName evidence="1">4-hydroxy-2-keto-pentanoic acid aldolase 4</fullName>
    </alternativeName>
    <alternativeName>
        <fullName>4-hydroxy-2-oxohexanoate aldolase</fullName>
        <ecNumber evidence="2">4.1.3.43</ecNumber>
    </alternativeName>
    <alternativeName>
        <fullName evidence="1">4-hydroxy-2-oxopentanoate aldolase 4</fullName>
    </alternativeName>
</protein>
<name>HOA4_PARXL</name>
<accession>P51015</accession>
<accession>Q13FU0</accession>
<evidence type="ECO:0000255" key="1">
    <source>
        <dbReference type="HAMAP-Rule" id="MF_01656"/>
    </source>
</evidence>
<evidence type="ECO:0000269" key="2">
    <source>
    </source>
</evidence>
<evidence type="ECO:0000269" key="3">
    <source>
    </source>
</evidence>
<evidence type="ECO:0000269" key="4">
    <source>
    </source>
</evidence>
<evidence type="ECO:0000269" key="5">
    <source>
    </source>
</evidence>
<evidence type="ECO:0000269" key="6">
    <source>
    </source>
</evidence>
<evidence type="ECO:0000305" key="7"/>
<dbReference type="EC" id="4.1.3.39" evidence="1 2"/>
<dbReference type="EC" id="4.1.3.43" evidence="2"/>
<dbReference type="EMBL" id="X76500">
    <property type="protein sequence ID" value="CAA54036.1"/>
    <property type="molecule type" value="Genomic_DNA"/>
</dbReference>
<dbReference type="EMBL" id="CP000272">
    <property type="protein sequence ID" value="ABE37049.1"/>
    <property type="molecule type" value="Genomic_DNA"/>
</dbReference>
<dbReference type="RefSeq" id="WP_003450974.1">
    <property type="nucleotide sequence ID" value="NZ_CP008761.1"/>
</dbReference>
<dbReference type="SMR" id="P51015"/>
<dbReference type="STRING" id="266265.Bxe_C1187"/>
<dbReference type="KEGG" id="bxb:DR64_8618"/>
<dbReference type="KEGG" id="bxe:Bxe_C1187"/>
<dbReference type="eggNOG" id="COG0119">
    <property type="taxonomic scope" value="Bacteria"/>
</dbReference>
<dbReference type="OrthoDB" id="9803573at2"/>
<dbReference type="BRENDA" id="4.1.3.39">
    <property type="organism ID" value="9987"/>
</dbReference>
<dbReference type="BRENDA" id="4.1.3.43">
    <property type="organism ID" value="7691"/>
</dbReference>
<dbReference type="SABIO-RK" id="P51015"/>
<dbReference type="UniPathway" id="UPA01002"/>
<dbReference type="Proteomes" id="UP000001817">
    <property type="component" value="Chromosome 3"/>
</dbReference>
<dbReference type="GO" id="GO:0003852">
    <property type="term" value="F:2-isopropylmalate synthase activity"/>
    <property type="evidence" value="ECO:0007669"/>
    <property type="project" value="TreeGrafter"/>
</dbReference>
<dbReference type="GO" id="GO:0008701">
    <property type="term" value="F:4-hydroxy-2-oxovalerate aldolase activity"/>
    <property type="evidence" value="ECO:0007669"/>
    <property type="project" value="UniProtKB-UniRule"/>
</dbReference>
<dbReference type="GO" id="GO:0030145">
    <property type="term" value="F:manganese ion binding"/>
    <property type="evidence" value="ECO:0007669"/>
    <property type="project" value="UniProtKB-UniRule"/>
</dbReference>
<dbReference type="GO" id="GO:0009056">
    <property type="term" value="P:catabolic process"/>
    <property type="evidence" value="ECO:0007669"/>
    <property type="project" value="UniProtKB-KW"/>
</dbReference>
<dbReference type="GO" id="GO:0009098">
    <property type="term" value="P:L-leucine biosynthetic process"/>
    <property type="evidence" value="ECO:0007669"/>
    <property type="project" value="TreeGrafter"/>
</dbReference>
<dbReference type="CDD" id="cd07943">
    <property type="entry name" value="DRE_TIM_HOA"/>
    <property type="match status" value="1"/>
</dbReference>
<dbReference type="Gene3D" id="1.10.8.60">
    <property type="match status" value="1"/>
</dbReference>
<dbReference type="Gene3D" id="3.20.20.70">
    <property type="entry name" value="Aldolase class I"/>
    <property type="match status" value="1"/>
</dbReference>
<dbReference type="HAMAP" id="MF_01656">
    <property type="entry name" value="HOA"/>
    <property type="match status" value="1"/>
</dbReference>
<dbReference type="InterPro" id="IPR050073">
    <property type="entry name" value="2-IPM_HCS-like"/>
</dbReference>
<dbReference type="InterPro" id="IPR017629">
    <property type="entry name" value="4OH_2_O-val_aldolase"/>
</dbReference>
<dbReference type="InterPro" id="IPR013785">
    <property type="entry name" value="Aldolase_TIM"/>
</dbReference>
<dbReference type="InterPro" id="IPR012425">
    <property type="entry name" value="DmpG_comm"/>
</dbReference>
<dbReference type="InterPro" id="IPR035685">
    <property type="entry name" value="DRE_TIM_HOA"/>
</dbReference>
<dbReference type="InterPro" id="IPR000891">
    <property type="entry name" value="PYR_CT"/>
</dbReference>
<dbReference type="NCBIfam" id="TIGR03217">
    <property type="entry name" value="4OH_2_O_val_ald"/>
    <property type="match status" value="1"/>
</dbReference>
<dbReference type="NCBIfam" id="NF006049">
    <property type="entry name" value="PRK08195.1"/>
    <property type="match status" value="1"/>
</dbReference>
<dbReference type="PANTHER" id="PTHR10277:SF9">
    <property type="entry name" value="2-ISOPROPYLMALATE SYNTHASE 1, CHLOROPLASTIC-RELATED"/>
    <property type="match status" value="1"/>
</dbReference>
<dbReference type="PANTHER" id="PTHR10277">
    <property type="entry name" value="HOMOCITRATE SYNTHASE-RELATED"/>
    <property type="match status" value="1"/>
</dbReference>
<dbReference type="Pfam" id="PF07836">
    <property type="entry name" value="DmpG_comm"/>
    <property type="match status" value="1"/>
</dbReference>
<dbReference type="Pfam" id="PF00682">
    <property type="entry name" value="HMGL-like"/>
    <property type="match status" value="1"/>
</dbReference>
<dbReference type="SUPFAM" id="SSF51569">
    <property type="entry name" value="Aldolase"/>
    <property type="match status" value="1"/>
</dbReference>
<dbReference type="SUPFAM" id="SSF89000">
    <property type="entry name" value="post-HMGL domain-like"/>
    <property type="match status" value="1"/>
</dbReference>
<dbReference type="PROSITE" id="PS50991">
    <property type="entry name" value="PYR_CT"/>
    <property type="match status" value="1"/>
</dbReference>
<feature type="chain" id="PRO_0000064978" description="4-hydroxy-2-oxovalerate aldolase 4">
    <location>
        <begin position="1"/>
        <end position="346"/>
    </location>
</feature>
<feature type="domain" description="Pyruvate carboxyltransferase" evidence="1">
    <location>
        <begin position="8"/>
        <end position="260"/>
    </location>
</feature>
<feature type="active site" description="Proton acceptor" evidence="1">
    <location>
        <position position="20"/>
    </location>
</feature>
<feature type="binding site" evidence="1">
    <location>
        <begin position="16"/>
        <end position="17"/>
    </location>
    <ligand>
        <name>substrate</name>
    </ligand>
</feature>
<feature type="binding site" evidence="1">
    <location>
        <position position="17"/>
    </location>
    <ligand>
        <name>Mn(2+)</name>
        <dbReference type="ChEBI" id="CHEBI:29035"/>
    </ligand>
</feature>
<feature type="binding site" evidence="1">
    <location>
        <position position="170"/>
    </location>
    <ligand>
        <name>substrate</name>
    </ligand>
</feature>
<feature type="binding site" evidence="1">
    <location>
        <position position="199"/>
    </location>
    <ligand>
        <name>Mn(2+)</name>
        <dbReference type="ChEBI" id="CHEBI:29035"/>
    </ligand>
</feature>
<feature type="binding site" evidence="1">
    <location>
        <position position="199"/>
    </location>
    <ligand>
        <name>substrate</name>
    </ligand>
</feature>
<feature type="binding site" evidence="1">
    <location>
        <position position="201"/>
    </location>
    <ligand>
        <name>Mn(2+)</name>
        <dbReference type="ChEBI" id="CHEBI:29035"/>
    </ligand>
</feature>
<feature type="binding site" evidence="1">
    <location>
        <position position="290"/>
    </location>
    <ligand>
        <name>substrate</name>
    </ligand>
</feature>
<feature type="site" description="Transition state stabilizer" evidence="1">
    <location>
        <position position="16"/>
    </location>
</feature>
<feature type="site" description="Important for aldehyde specificity, and governs stereochemical control">
    <location>
        <position position="87"/>
    </location>
</feature>
<feature type="site" description="Important for aldehyde specificity; governs substrate alkyl chain length">
    <location>
        <position position="89"/>
    </location>
</feature>
<feature type="site" description="Governs stereochemical control">
    <location>
        <position position="290"/>
    </location>
</feature>
<feature type="mutagenesis site" description="Loss of aldol cleavage activity." evidence="4">
    <original>R</original>
    <variation>A</variation>
    <location>
        <position position="16"/>
    </location>
</feature>
<feature type="mutagenesis site" description="4000-fold decrease in the catalytic efficiency of the aldol cleavage reaction." evidence="4">
    <original>R</original>
    <variation>K</variation>
    <location>
        <position position="16"/>
    </location>
</feature>
<feature type="mutagenesis site" description="100-fold decrease in the catalytic efficiency of the aldol cleavage reaction. Dramatic reduction in acetaldehyde and propanaldehyde channeling efficiency by more than 70%." evidence="4 5">
    <original>H</original>
    <variation>A</variation>
    <variation>S</variation>
    <location>
        <position position="20"/>
    </location>
</feature>
<feature type="mutagenesis site" description="32-fold reduction in the catalytic efficiency with acetaldehyde as substrate of the aldol addition reaction, but no change in the catalytic efficiency using propanaldehyde; thus, exhibits a 40-fold preference for propanaldehyde over acetaldehyde." evidence="4 6">
    <original>L</original>
    <variation>A</variation>
    <location>
        <position position="87"/>
    </location>
</feature>
<feature type="mutagenesis site" description="Loss of aldolase activity (with either enantiomer of HOPA), but retains some decarboxylase activity for the smaller oxaloacetate substrate. In the retro-aldol cleavage reaction, is inactive toward 4(S)-HOPA but is active toward 4(R)-HOPA, albeit with a great reduction in catalytic efficiency, and in the aldol addition reaction, also produces exclusively the 4(R)-enantiomer; when associated with F-290." evidence="4 6">
    <original>L</original>
    <variation>N</variation>
    <variation>W</variation>
    <location>
        <position position="87"/>
    </location>
</feature>
<feature type="mutagenesis site" description="As the wild-type enzyme, exhibits similar catalytic efficiency with acetaldehyde or propanaldehyde as substrate in the aldol addition reaction but displays higher catalytic efficiency with longer aldehydes (50-fold increase using pentaldehyde). Shows a reduction in aldehyde channeling efficiency by 30%." evidence="4 5">
    <original>L</original>
    <variation>A</variation>
    <location>
        <position position="89"/>
    </location>
</feature>
<feature type="mutagenesis site" description="Loss of stereochemical control as the mutant is able to catalyze the aldol cleavage of substrates with both R and S configurations at C4 with similar kinetic parameters. 3.5-fold decrease in the catalytic efficiency of the aldol cleavage reaction. Reduction in aldehyde channeling efficiency by more than 30%. In the retro-aldol cleavage reaction, is inactive toward 4(S)-HOPA but is active toward 4(R)-HOPA, albeit with a great reduction in catalytic efficiency, and in the aldol addition reaction, also produces exclusively the 4(R)-enantiomer; when associated with N-87 or W-87." evidence="4 5 6">
    <original>Y</original>
    <variation>F</variation>
    <location>
        <position position="290"/>
    </location>
</feature>
<feature type="mutagenesis site" description="Loss of stereochemical control as the mutant is able to catalyze the aldol cleavage of substrates with both R and S configurations at C4 with similar kinetic parameters. 3.5-fold decrease in the catalytic efficiency of the aldol cleavage reaction." evidence="4 5 6">
    <original>Y</original>
    <variation>S</variation>
    <location>
        <position position="290"/>
    </location>
</feature>
<feature type="mutagenesis site" description="Displays a reduction in aldehyde channeling efficiency of about 20%." evidence="5">
    <original>G</original>
    <variation>A</variation>
    <location>
        <position position="322"/>
    </location>
</feature>
<feature type="mutagenesis site" description="Unable to channel either acetaldehyde or propanaldehyde." evidence="5">
    <original>G</original>
    <variation>F</variation>
    <variation>L</variation>
    <location>
        <position position="322"/>
    </location>
</feature>
<feature type="mutagenesis site" description="Able to channel butyraldehyde (with less efficiency than wild-type) but not its isomer isobutyraldehyde." evidence="5">
    <original>G</original>
    <variation>A</variation>
    <location>
        <position position="323"/>
    </location>
</feature>
<feature type="mutagenesis site" description="Unable to channel either acetaldehyde or propanaldehyde." evidence="5">
    <original>G</original>
    <variation>F</variation>
    <location>
        <position position="323"/>
    </location>
</feature>
<feature type="mutagenesis site" description="Able to channel acetaldehyde but not the larger propanaldehyde." evidence="5">
    <original>G</original>
    <variation>L</variation>
    <location>
        <position position="323"/>
    </location>
</feature>
<feature type="sequence conflict" description="In Ref. 1; CAA54036." evidence="7" ref="1">
    <original>A</original>
    <variation>S</variation>
    <location>
        <position position="263"/>
    </location>
</feature>
<feature type="sequence conflict" description="In Ref. 1; CAA54036." evidence="7" ref="1">
    <original>A</original>
    <variation>E</variation>
    <location>
        <position position="302"/>
    </location>
</feature>
<sequence length="346" mass="36798">MKLEGKKVTVHDMTLRDGMHPKRHQMTLEQMKSIACGLDAAGIPLIEVTHGDGLGGSSVNYGFPAHSDEEYLGAVIPLMKQAKVSALLLPGIGTVEHLKMAKDLGVNTIRVATHCTEADVSEQHITQSRKLGLDTVGFLMMAHMASPEKLVSQALLMQGYGANCIYVTDSAGYMLPDDVKARLSAVRAALKPETELGFHGHHNLAMGVANSIAAIEAGATRIDAAAAGLGAGAGNTPMEVFIAVCARMGIETGVDVFKIQDVAEDLVVPIMDHVIRIDRDSLTLGYAGVYSSFLLFAKRASAKYGVPARDILVELGRRGMVGGQEDMIEDTAMTMARERGLTLTAA</sequence>